<name>XOAT7_ORYSJ</name>
<reference key="1">
    <citation type="journal article" date="2018" name="Planta">
        <title>Biochemical characterization of rice xylan O-acetyltransferases.</title>
        <authorList>
            <person name="Zhong R."/>
            <person name="Cui D."/>
            <person name="Dasher R.L."/>
            <person name="Ye Z.H."/>
        </authorList>
    </citation>
    <scope>NUCLEOTIDE SEQUENCE [MRNA]</scope>
    <scope>FUNCTION</scope>
    <scope>CATALYTIC ACTIVITY</scope>
    <scope>BIOPHYSICOCHEMICAL PROPERTIES</scope>
    <scope>TISSUE SPECIFICITY</scope>
</reference>
<reference key="2">
    <citation type="journal article" date="2005" name="Nature">
        <title>The map-based sequence of the rice genome.</title>
        <authorList>
            <consortium name="International rice genome sequencing project (IRGSP)"/>
        </authorList>
    </citation>
    <scope>NUCLEOTIDE SEQUENCE [LARGE SCALE GENOMIC DNA]</scope>
    <source>
        <strain>cv. Nipponbare</strain>
    </source>
</reference>
<reference key="3">
    <citation type="journal article" date="2013" name="Rice">
        <title>Improvement of the Oryza sativa Nipponbare reference genome using next generation sequence and optical map data.</title>
        <authorList>
            <person name="Kawahara Y."/>
            <person name="de la Bastide M."/>
            <person name="Hamilton J.P."/>
            <person name="Kanamori H."/>
            <person name="McCombie W.R."/>
            <person name="Ouyang S."/>
            <person name="Schwartz D.C."/>
            <person name="Tanaka T."/>
            <person name="Wu J."/>
            <person name="Zhou S."/>
            <person name="Childs K.L."/>
            <person name="Davidson R.M."/>
            <person name="Lin H."/>
            <person name="Quesada-Ocampo L."/>
            <person name="Vaillancourt B."/>
            <person name="Sakai H."/>
            <person name="Lee S.S."/>
            <person name="Kim J."/>
            <person name="Numa H."/>
            <person name="Itoh T."/>
            <person name="Buell C.R."/>
            <person name="Matsumoto T."/>
        </authorList>
    </citation>
    <scope>GENOME REANNOTATION</scope>
    <source>
        <strain>cv. Nipponbare</strain>
    </source>
</reference>
<reference key="4">
    <citation type="journal article" date="2005" name="PLoS Biol.">
        <title>The genomes of Oryza sativa: a history of duplications.</title>
        <authorList>
            <person name="Yu J."/>
            <person name="Wang J."/>
            <person name="Lin W."/>
            <person name="Li S."/>
            <person name="Li H."/>
            <person name="Zhou J."/>
            <person name="Ni P."/>
            <person name="Dong W."/>
            <person name="Hu S."/>
            <person name="Zeng C."/>
            <person name="Zhang J."/>
            <person name="Zhang Y."/>
            <person name="Li R."/>
            <person name="Xu Z."/>
            <person name="Li S."/>
            <person name="Li X."/>
            <person name="Zheng H."/>
            <person name="Cong L."/>
            <person name="Lin L."/>
            <person name="Yin J."/>
            <person name="Geng J."/>
            <person name="Li G."/>
            <person name="Shi J."/>
            <person name="Liu J."/>
            <person name="Lv H."/>
            <person name="Li J."/>
            <person name="Wang J."/>
            <person name="Deng Y."/>
            <person name="Ran L."/>
            <person name="Shi X."/>
            <person name="Wang X."/>
            <person name="Wu Q."/>
            <person name="Li C."/>
            <person name="Ren X."/>
            <person name="Wang J."/>
            <person name="Wang X."/>
            <person name="Li D."/>
            <person name="Liu D."/>
            <person name="Zhang X."/>
            <person name="Ji Z."/>
            <person name="Zhao W."/>
            <person name="Sun Y."/>
            <person name="Zhang Z."/>
            <person name="Bao J."/>
            <person name="Han Y."/>
            <person name="Dong L."/>
            <person name="Ji J."/>
            <person name="Chen P."/>
            <person name="Wu S."/>
            <person name="Liu J."/>
            <person name="Xiao Y."/>
            <person name="Bu D."/>
            <person name="Tan J."/>
            <person name="Yang L."/>
            <person name="Ye C."/>
            <person name="Zhang J."/>
            <person name="Xu J."/>
            <person name="Zhou Y."/>
            <person name="Yu Y."/>
            <person name="Zhang B."/>
            <person name="Zhuang S."/>
            <person name="Wei H."/>
            <person name="Liu B."/>
            <person name="Lei M."/>
            <person name="Yu H."/>
            <person name="Li Y."/>
            <person name="Xu H."/>
            <person name="Wei S."/>
            <person name="He X."/>
            <person name="Fang L."/>
            <person name="Zhang Z."/>
            <person name="Zhang Y."/>
            <person name="Huang X."/>
            <person name="Su Z."/>
            <person name="Tong W."/>
            <person name="Li J."/>
            <person name="Tong Z."/>
            <person name="Li S."/>
            <person name="Ye J."/>
            <person name="Wang L."/>
            <person name="Fang L."/>
            <person name="Lei T."/>
            <person name="Chen C.-S."/>
            <person name="Chen H.-C."/>
            <person name="Xu Z."/>
            <person name="Li H."/>
            <person name="Huang H."/>
            <person name="Zhang F."/>
            <person name="Xu H."/>
            <person name="Li N."/>
            <person name="Zhao C."/>
            <person name="Li S."/>
            <person name="Dong L."/>
            <person name="Huang Y."/>
            <person name="Li L."/>
            <person name="Xi Y."/>
            <person name="Qi Q."/>
            <person name="Li W."/>
            <person name="Zhang B."/>
            <person name="Hu W."/>
            <person name="Zhang Y."/>
            <person name="Tian X."/>
            <person name="Jiao Y."/>
            <person name="Liang X."/>
            <person name="Jin J."/>
            <person name="Gao L."/>
            <person name="Zheng W."/>
            <person name="Hao B."/>
            <person name="Liu S.-M."/>
            <person name="Wang W."/>
            <person name="Yuan L."/>
            <person name="Cao M."/>
            <person name="McDermott J."/>
            <person name="Samudrala R."/>
            <person name="Wang J."/>
            <person name="Wong G.K.-S."/>
            <person name="Yang H."/>
        </authorList>
    </citation>
    <scope>NUCLEOTIDE SEQUENCE [LARGE SCALE GENOMIC DNA]</scope>
    <source>
        <strain>cv. Nipponbare</strain>
    </source>
</reference>
<reference key="5">
    <citation type="journal article" date="2017" name="Plant Physiol.">
        <title>Two trichome birefringence-like proteins mediate xylan acetylation, which is essential for leaf blight resistance in rice.</title>
        <authorList>
            <person name="Gao Y."/>
            <person name="He C."/>
            <person name="Zhang D."/>
            <person name="Liu X."/>
            <person name="Xu Z."/>
            <person name="Tian Y."/>
            <person name="Liu X.H."/>
            <person name="Zang S."/>
            <person name="Pauly M."/>
            <person name="Zhou Y."/>
            <person name="Zhang B."/>
        </authorList>
    </citation>
    <scope>GENE FAMILY</scope>
    <scope>NOMENCLATURE</scope>
</reference>
<gene>
    <name evidence="8" type="primary">XOAT7</name>
    <name evidence="7" type="synonym">TBL14</name>
    <name evidence="11" type="ordered locus">Os07g0693600</name>
    <name evidence="9" type="ordered locus">LOC_Os07g49280</name>
    <name evidence="12" type="ORF">OsJ_25693</name>
</gene>
<evidence type="ECO:0000250" key="1">
    <source>
        <dbReference type="UniProtKB" id="Q2QYU2"/>
    </source>
</evidence>
<evidence type="ECO:0000250" key="2">
    <source>
        <dbReference type="UniProtKB" id="Q9LY46"/>
    </source>
</evidence>
<evidence type="ECO:0000255" key="3"/>
<evidence type="ECO:0000255" key="4">
    <source>
        <dbReference type="PROSITE-ProRule" id="PRU00498"/>
    </source>
</evidence>
<evidence type="ECO:0000256" key="5">
    <source>
        <dbReference type="SAM" id="MobiDB-lite"/>
    </source>
</evidence>
<evidence type="ECO:0000269" key="6">
    <source>
    </source>
</evidence>
<evidence type="ECO:0000303" key="7">
    <source>
    </source>
</evidence>
<evidence type="ECO:0000303" key="8">
    <source>
    </source>
</evidence>
<evidence type="ECO:0000305" key="9"/>
<evidence type="ECO:0000305" key="10">
    <source>
    </source>
</evidence>
<evidence type="ECO:0000312" key="11">
    <source>
        <dbReference type="EMBL" id="BAT03359.1"/>
    </source>
</evidence>
<evidence type="ECO:0000312" key="12">
    <source>
        <dbReference type="EMBL" id="EAZ41191.1"/>
    </source>
</evidence>
<organism>
    <name type="scientific">Oryza sativa subsp. japonica</name>
    <name type="common">Rice</name>
    <dbReference type="NCBI Taxonomy" id="39947"/>
    <lineage>
        <taxon>Eukaryota</taxon>
        <taxon>Viridiplantae</taxon>
        <taxon>Streptophyta</taxon>
        <taxon>Embryophyta</taxon>
        <taxon>Tracheophyta</taxon>
        <taxon>Spermatophyta</taxon>
        <taxon>Magnoliopsida</taxon>
        <taxon>Liliopsida</taxon>
        <taxon>Poales</taxon>
        <taxon>Poaceae</taxon>
        <taxon>BOP clade</taxon>
        <taxon>Oryzoideae</taxon>
        <taxon>Oryzeae</taxon>
        <taxon>Oryzinae</taxon>
        <taxon>Oryza</taxon>
        <taxon>Oryza sativa</taxon>
    </lineage>
</organism>
<accession>Q0D3C8</accession>
<accession>A0A0P0XAF8</accession>
<sequence length="605" mass="68270">MKKKKNGMGAAADRGRLLALAHHDKLNPTKPSEAQRRFKPSILLLLGSSLPRLVPPLPSSFLPVVIKQTEFHQRWLVGDLNPPPPPCHLLPIQGQGQMQMQQRRKPPPAAAPVAAKQPSPRRTPGPLSFAGALLSLLVVATFLYINDHGNMMPPHASPDPDLRLLQEAAHQKVNSILLSRHAPAPPPRTNTNTSSSDQHLRLINIPMSSDLDLELGGNSTSSSGVEIQFEQQQQQEEKNLRGCELYKGRWVYDAAGREAPLYRESECGFLTEQVTCMRNGRRDDSYQRWRWQPEGCDLPSFDARALLERLRNKRMMFVGDSLNRNQWESMVCLVQSAIPYGQKTLTKFVNNGSLNVFRAHEYNATVEFYWAPFLVQSNSDDPQVHSVRDRVIAWRSIAKHAANWKGVHYLVFNTYIWWLNNFQIKVLKSRGAPFAGSGGWSSRYALVDRAIAYREVLKTWAKWVDRRIDPNKTHVFFMAMSPNHFMPEAWGGSAGAVKCAMETQPIVNRTSGGLDIGTDWRLHGVARGVLRSMRRVGVRFVDITALSELRKDAHTSVHTLRQGKLLTPEQQADPRTYADCIHWCLPGLPDTWNHFLYAHIVAHAA</sequence>
<proteinExistence type="evidence at protein level"/>
<feature type="chain" id="PRO_0000454031" description="Xylan O-acetyltransferase 7">
    <location>
        <begin position="1"/>
        <end position="605"/>
    </location>
</feature>
<feature type="topological domain" description="Cytoplasmic" evidence="9">
    <location>
        <begin position="1"/>
        <end position="124"/>
    </location>
</feature>
<feature type="transmembrane region" description="Helical; Signal-anchor for type II membrane protein" evidence="3">
    <location>
        <begin position="125"/>
        <end position="145"/>
    </location>
</feature>
<feature type="topological domain" description="Lumenal" evidence="9">
    <location>
        <begin position="146"/>
        <end position="605"/>
    </location>
</feature>
<feature type="region of interest" description="Disordered" evidence="5">
    <location>
        <begin position="86"/>
        <end position="126"/>
    </location>
</feature>
<feature type="short sequence motif" description="GDS motif" evidence="10">
    <location>
        <begin position="319"/>
        <end position="321"/>
    </location>
</feature>
<feature type="short sequence motif" description="DXXH motif" evidence="10">
    <location>
        <begin position="579"/>
        <end position="582"/>
    </location>
</feature>
<feature type="active site" description="Nucleophile" evidence="2">
    <location>
        <position position="321"/>
    </location>
</feature>
<feature type="active site" description="Proton donor" evidence="2">
    <location>
        <position position="579"/>
    </location>
</feature>
<feature type="active site" description="Proton acceptor" evidence="2">
    <location>
        <position position="582"/>
    </location>
</feature>
<feature type="glycosylation site" description="N-linked (GlcNAc...) asparagine" evidence="4">
    <location>
        <position position="192"/>
    </location>
</feature>
<feature type="glycosylation site" description="N-linked (GlcNAc...) asparagine" evidence="4">
    <location>
        <position position="218"/>
    </location>
</feature>
<feature type="glycosylation site" description="N-linked (GlcNAc...) asparagine" evidence="4">
    <location>
        <position position="351"/>
    </location>
</feature>
<feature type="glycosylation site" description="N-linked (GlcNAc...) asparagine" evidence="4">
    <location>
        <position position="363"/>
    </location>
</feature>
<feature type="glycosylation site" description="N-linked (GlcNAc...) asparagine" evidence="4">
    <location>
        <position position="471"/>
    </location>
</feature>
<feature type="glycosylation site" description="N-linked (GlcNAc...) asparagine" evidence="4">
    <location>
        <position position="508"/>
    </location>
</feature>
<feature type="disulfide bond" evidence="2">
    <location>
        <begin position="243"/>
        <end position="296"/>
    </location>
</feature>
<feature type="disulfide bond" evidence="2">
    <location>
        <begin position="267"/>
        <end position="332"/>
    </location>
</feature>
<feature type="disulfide bond" evidence="2">
    <location>
        <begin position="276"/>
        <end position="584"/>
    </location>
</feature>
<feature type="disulfide bond" evidence="2">
    <location>
        <begin position="499"/>
        <end position="580"/>
    </location>
</feature>
<protein>
    <recommendedName>
        <fullName evidence="8">Xylan O-acetyltransferase 7</fullName>
        <ecNumber evidence="6">2.3.1.-</ecNumber>
    </recommendedName>
    <alternativeName>
        <fullName evidence="7">Protein trichome birefringence-like 14</fullName>
        <shortName evidence="7">OsTBL14</shortName>
    </alternativeName>
</protein>
<keyword id="KW-1015">Disulfide bond</keyword>
<keyword id="KW-0325">Glycoprotein</keyword>
<keyword id="KW-0333">Golgi apparatus</keyword>
<keyword id="KW-0472">Membrane</keyword>
<keyword id="KW-1185">Reference proteome</keyword>
<keyword id="KW-0735">Signal-anchor</keyword>
<keyword id="KW-0808">Transferase</keyword>
<keyword id="KW-0812">Transmembrane</keyword>
<keyword id="KW-1133">Transmembrane helix</keyword>
<dbReference type="EC" id="2.3.1.-" evidence="6"/>
<dbReference type="EMBL" id="MH037021">
    <property type="protein sequence ID" value="AVR54511.1"/>
    <property type="molecule type" value="mRNA"/>
</dbReference>
<dbReference type="EMBL" id="AP014963">
    <property type="protein sequence ID" value="BAT03359.1"/>
    <property type="molecule type" value="Genomic_DNA"/>
</dbReference>
<dbReference type="EMBL" id="CM000144">
    <property type="protein sequence ID" value="EAZ41191.1"/>
    <property type="molecule type" value="Genomic_DNA"/>
</dbReference>
<dbReference type="RefSeq" id="XP_015646517.1">
    <property type="nucleotide sequence ID" value="XM_015791031.1"/>
</dbReference>
<dbReference type="SMR" id="Q0D3C8"/>
<dbReference type="FunCoup" id="Q0D3C8">
    <property type="interactions" value="4"/>
</dbReference>
<dbReference type="GlyCosmos" id="Q0D3C8">
    <property type="glycosylation" value="6 sites, No reported glycans"/>
</dbReference>
<dbReference type="PaxDb" id="39947-Q0D3C8"/>
<dbReference type="EnsemblPlants" id="Os07t0693600-01">
    <property type="protein sequence ID" value="Os07t0693600-01"/>
    <property type="gene ID" value="Os07g0693600"/>
</dbReference>
<dbReference type="Gramene" id="Os07t0693600-01">
    <property type="protein sequence ID" value="Os07t0693600-01"/>
    <property type="gene ID" value="Os07g0693600"/>
</dbReference>
<dbReference type="eggNOG" id="ENOG502QUBK">
    <property type="taxonomic scope" value="Eukaryota"/>
</dbReference>
<dbReference type="HOGENOM" id="CLU_020953_3_2_1"/>
<dbReference type="InParanoid" id="Q0D3C8"/>
<dbReference type="OMA" id="METQPIV"/>
<dbReference type="OrthoDB" id="1932925at2759"/>
<dbReference type="Proteomes" id="UP000007752">
    <property type="component" value="Chromosome 7"/>
</dbReference>
<dbReference type="Proteomes" id="UP000059680">
    <property type="component" value="Chromosome 7"/>
</dbReference>
<dbReference type="GO" id="GO:0005794">
    <property type="term" value="C:Golgi apparatus"/>
    <property type="evidence" value="ECO:0000318"/>
    <property type="project" value="GO_Central"/>
</dbReference>
<dbReference type="GO" id="GO:0000139">
    <property type="term" value="C:Golgi membrane"/>
    <property type="evidence" value="ECO:0000250"/>
    <property type="project" value="UniProtKB"/>
</dbReference>
<dbReference type="GO" id="GO:0016413">
    <property type="term" value="F:O-acetyltransferase activity"/>
    <property type="evidence" value="ECO:0000318"/>
    <property type="project" value="GO_Central"/>
</dbReference>
<dbReference type="GO" id="GO:1990538">
    <property type="term" value="F:xylan O-acetyltransferase activity"/>
    <property type="evidence" value="ECO:0000314"/>
    <property type="project" value="UniProtKB"/>
</dbReference>
<dbReference type="GO" id="GO:1990937">
    <property type="term" value="P:xylan acetylation"/>
    <property type="evidence" value="ECO:0000314"/>
    <property type="project" value="UniProtKB"/>
</dbReference>
<dbReference type="InterPro" id="IPR029962">
    <property type="entry name" value="TBL"/>
</dbReference>
<dbReference type="InterPro" id="IPR026057">
    <property type="entry name" value="TBL_C"/>
</dbReference>
<dbReference type="InterPro" id="IPR025846">
    <property type="entry name" value="TBL_N"/>
</dbReference>
<dbReference type="PANTHER" id="PTHR32285">
    <property type="entry name" value="PROTEIN TRICHOME BIREFRINGENCE-LIKE 9-RELATED"/>
    <property type="match status" value="1"/>
</dbReference>
<dbReference type="PANTHER" id="PTHR32285:SF327">
    <property type="entry name" value="XYLAN O-ACETYLTRANSFERASE 7"/>
    <property type="match status" value="1"/>
</dbReference>
<dbReference type="Pfam" id="PF13839">
    <property type="entry name" value="PC-Esterase"/>
    <property type="match status" value="1"/>
</dbReference>
<dbReference type="Pfam" id="PF14416">
    <property type="entry name" value="PMR5N"/>
    <property type="match status" value="1"/>
</dbReference>
<comment type="function">
    <text evidence="2 6">Xylan acetyltransferase required for 2-O- and 3-O-monoacetylation of xylosyl residues in xylan (PubMed:29569182). Catalyzes the 2-O-acetylation of xylan, followed by nonenzymatic acetyl migration to the O-3 position, resulting in products that are monoacetylated at both O-2 and O-3 positions (By similarity).</text>
</comment>
<comment type="biophysicochemical properties">
    <kinetics>
        <KM evidence="6">60 uM for xylohexaose</KM>
        <Vmax evidence="6">37.7 pmol/min/mg enzyme with xylohexaose as substrate</Vmax>
    </kinetics>
</comment>
<comment type="subcellular location">
    <subcellularLocation>
        <location evidence="1">Golgi apparatus membrane</location>
        <topology evidence="3">Single-pass type II membrane protein</topology>
    </subcellularLocation>
</comment>
<comment type="tissue specificity">
    <text evidence="6">Expressed in roots, leaves and stems.</text>
</comment>
<comment type="similarity">
    <text evidence="9">Belongs to the PC-esterase family. TBL subfamily.</text>
</comment>